<feature type="chain" id="PRO_0000306843" description="DDB1- and CUL4-associated factor 12">
    <location>
        <begin position="1"/>
        <end position="427"/>
    </location>
</feature>
<feature type="repeat" description="WD 1">
    <location>
        <begin position="110"/>
        <end position="150"/>
    </location>
</feature>
<feature type="repeat" description="WD 2">
    <location>
        <begin position="154"/>
        <end position="192"/>
    </location>
</feature>
<feature type="repeat" description="WD 3">
    <location>
        <begin position="222"/>
        <end position="261"/>
    </location>
</feature>
<feature type="repeat" description="WD 4">
    <location>
        <begin position="310"/>
        <end position="347"/>
    </location>
</feature>
<name>DCA12_CHICK</name>
<evidence type="ECO:0000250" key="1">
    <source>
        <dbReference type="UniProtKB" id="Q5T6F0"/>
    </source>
</evidence>
<evidence type="ECO:0000303" key="2">
    <source>
    </source>
</evidence>
<evidence type="ECO:0000305" key="3"/>
<gene>
    <name type="primary">DCAF12</name>
    <name type="synonym">WDR40A</name>
    <name evidence="2" type="ORF">RCJMB04_8j18</name>
</gene>
<reference key="1">
    <citation type="journal article" date="2005" name="Genome Biol.">
        <title>Full-length cDNAs from chicken bursal lymphocytes to facilitate gene function analysis.</title>
        <authorList>
            <person name="Caldwell R.B."/>
            <person name="Kierzek A.M."/>
            <person name="Arakawa H."/>
            <person name="Bezzubov Y."/>
            <person name="Zaim J."/>
            <person name="Fiedler P."/>
            <person name="Kutter S."/>
            <person name="Blagodatski A."/>
            <person name="Kostovska D."/>
            <person name="Koter M."/>
            <person name="Plachy J."/>
            <person name="Carninci P."/>
            <person name="Hayashizaki Y."/>
            <person name="Buerstedde J.-M."/>
        </authorList>
    </citation>
    <scope>NUCLEOTIDE SEQUENCE [LARGE SCALE MRNA]</scope>
    <source>
        <strain>CB</strain>
        <tissue>Bursa of Fabricius</tissue>
    </source>
</reference>
<keyword id="KW-0963">Cytoplasm</keyword>
<keyword id="KW-0206">Cytoskeleton</keyword>
<keyword id="KW-0539">Nucleus</keyword>
<keyword id="KW-1185">Reference proteome</keyword>
<keyword id="KW-0677">Repeat</keyword>
<keyword id="KW-0833">Ubl conjugation pathway</keyword>
<keyword id="KW-0853">WD repeat</keyword>
<protein>
    <recommendedName>
        <fullName evidence="3">DDB1- and CUL4-associated factor 12</fullName>
    </recommendedName>
    <alternativeName>
        <fullName>WD repeat-containing protein 40A</fullName>
    </alternativeName>
</protein>
<dbReference type="EMBL" id="AJ851583">
    <property type="protein sequence ID" value="CAH65217.1"/>
    <property type="molecule type" value="mRNA"/>
</dbReference>
<dbReference type="RefSeq" id="NP_001026615.1">
    <property type="nucleotide sequence ID" value="NM_001031444.1"/>
</dbReference>
<dbReference type="SMR" id="Q5F3R7"/>
<dbReference type="FunCoup" id="Q5F3R7">
    <property type="interactions" value="576"/>
</dbReference>
<dbReference type="STRING" id="9031.ENSGALP00000009301"/>
<dbReference type="PaxDb" id="9031-ENSGALP00000009301"/>
<dbReference type="Ensembl" id="ENSGALT00010028036.1">
    <property type="protein sequence ID" value="ENSGALP00010016083.1"/>
    <property type="gene ID" value="ENSGALG00010011712.1"/>
</dbReference>
<dbReference type="KEGG" id="gga:427396"/>
<dbReference type="VEuPathDB" id="HostDB:geneid_427396"/>
<dbReference type="eggNOG" id="ENOG502QR7U">
    <property type="taxonomic scope" value="Eukaryota"/>
</dbReference>
<dbReference type="GeneTree" id="ENSGT00940000158028"/>
<dbReference type="InParanoid" id="Q5F3R7"/>
<dbReference type="PhylomeDB" id="Q5F3R7"/>
<dbReference type="UniPathway" id="UPA00143"/>
<dbReference type="PRO" id="PR:Q5F3R7"/>
<dbReference type="Proteomes" id="UP000000539">
    <property type="component" value="Chromosome Z"/>
</dbReference>
<dbReference type="Bgee" id="ENSGALG00000005800">
    <property type="expression patterns" value="Expressed in colon and 13 other cell types or tissues"/>
</dbReference>
<dbReference type="GO" id="GO:0005813">
    <property type="term" value="C:centrosome"/>
    <property type="evidence" value="ECO:0007669"/>
    <property type="project" value="UniProtKB-SubCell"/>
</dbReference>
<dbReference type="GO" id="GO:0080008">
    <property type="term" value="C:Cul4-RING E3 ubiquitin ligase complex"/>
    <property type="evidence" value="ECO:0000250"/>
    <property type="project" value="UniProtKB"/>
</dbReference>
<dbReference type="GO" id="GO:0005737">
    <property type="term" value="C:cytoplasm"/>
    <property type="evidence" value="ECO:0007669"/>
    <property type="project" value="UniProtKB-SubCell"/>
</dbReference>
<dbReference type="GO" id="GO:0005634">
    <property type="term" value="C:nucleus"/>
    <property type="evidence" value="ECO:0007669"/>
    <property type="project" value="UniProtKB-SubCell"/>
</dbReference>
<dbReference type="GO" id="GO:1990756">
    <property type="term" value="F:ubiquitin-like ligase-substrate adaptor activity"/>
    <property type="evidence" value="ECO:0000250"/>
    <property type="project" value="UniProtKB"/>
</dbReference>
<dbReference type="GO" id="GO:0016567">
    <property type="term" value="P:protein ubiquitination"/>
    <property type="evidence" value="ECO:0007669"/>
    <property type="project" value="UniProtKB-UniPathway"/>
</dbReference>
<dbReference type="GO" id="GO:0010506">
    <property type="term" value="P:regulation of autophagy"/>
    <property type="evidence" value="ECO:0000250"/>
    <property type="project" value="UniProtKB"/>
</dbReference>
<dbReference type="GO" id="GO:0140627">
    <property type="term" value="P:ubiquitin-dependent protein catabolic process via the C-end degron rule pathway"/>
    <property type="evidence" value="ECO:0000250"/>
    <property type="project" value="UniProtKB"/>
</dbReference>
<dbReference type="FunFam" id="2.130.10.10:FF:001190">
    <property type="entry name" value="DDB1 and CUL4 associated factor 12"/>
    <property type="match status" value="1"/>
</dbReference>
<dbReference type="FunFam" id="2.130.10.10:FF:000253">
    <property type="entry name" value="DDB1- and CUL4-associated factor 12"/>
    <property type="match status" value="1"/>
</dbReference>
<dbReference type="Gene3D" id="2.130.10.10">
    <property type="entry name" value="YVTN repeat-like/Quinoprotein amine dehydrogenase"/>
    <property type="match status" value="1"/>
</dbReference>
<dbReference type="InterPro" id="IPR056151">
    <property type="entry name" value="Beta-prop_DCAF12"/>
</dbReference>
<dbReference type="InterPro" id="IPR051191">
    <property type="entry name" value="DCAF12"/>
</dbReference>
<dbReference type="InterPro" id="IPR015943">
    <property type="entry name" value="WD40/YVTN_repeat-like_dom_sf"/>
</dbReference>
<dbReference type="InterPro" id="IPR019775">
    <property type="entry name" value="WD40_repeat_CS"/>
</dbReference>
<dbReference type="InterPro" id="IPR036322">
    <property type="entry name" value="WD40_repeat_dom_sf"/>
</dbReference>
<dbReference type="InterPro" id="IPR001680">
    <property type="entry name" value="WD40_rpt"/>
</dbReference>
<dbReference type="PANTHER" id="PTHR19860:SF16">
    <property type="entry name" value="DDB1- AND CUL4-ASSOCIATED FACTOR 12"/>
    <property type="match status" value="1"/>
</dbReference>
<dbReference type="PANTHER" id="PTHR19860">
    <property type="entry name" value="DDB1- AND CUL4-ASSOCIATED FACTOR 12-RELATED"/>
    <property type="match status" value="1"/>
</dbReference>
<dbReference type="Pfam" id="PF23760">
    <property type="entry name" value="Beta-prop_DCAF12"/>
    <property type="match status" value="1"/>
</dbReference>
<dbReference type="SMART" id="SM00320">
    <property type="entry name" value="WD40"/>
    <property type="match status" value="2"/>
</dbReference>
<dbReference type="SUPFAM" id="SSF50978">
    <property type="entry name" value="WD40 repeat-like"/>
    <property type="match status" value="1"/>
</dbReference>
<dbReference type="PROSITE" id="PS00678">
    <property type="entry name" value="WD_REPEATS_1"/>
    <property type="match status" value="1"/>
</dbReference>
<dbReference type="PROSITE" id="PS50082">
    <property type="entry name" value="WD_REPEATS_2"/>
    <property type="match status" value="1"/>
</dbReference>
<dbReference type="PROSITE" id="PS50294">
    <property type="entry name" value="WD_REPEATS_REGION"/>
    <property type="match status" value="1"/>
</dbReference>
<proteinExistence type="evidence at transcript level"/>
<comment type="function">
    <text evidence="1">Substrate-recognition component of a DCX (DDB1-CUL4-X-box) E3 ubiquitin-protein ligase complex of the DesCEND (destruction via C-end degrons) pathway, which recognizes a C-degron located at the extreme C terminus of target proteins, leading to their ubiquitination and degradation. The C-degron recognized by the DesCEND pathway is usually a motif of less than ten residues and can be present in full-length proteins, truncated proteins or proteolytically cleaved forms. The DCX(DCAF12) complex specifically recognizes proteins with a diglutamate (Glu-Glu) at the C-terminus leading to their ubiquitination and degradation. Also directly recognizes the C-terminal glutamate-leucine (Glu-Leu) degron as an alternative degron in proteins leading to their ubiquitination and degradation.</text>
</comment>
<comment type="pathway">
    <text evidence="1">Protein modification; protein ubiquitination.</text>
</comment>
<comment type="subunit">
    <text evidence="1">Component of the DCX(DCAF12) E3 ubiquitin ligase complex, at least composed of CUL4 (CUL4A or CUL4B), DDB1, DCAF12 and RBX1.</text>
</comment>
<comment type="subcellular location">
    <subcellularLocation>
        <location evidence="1">Cytoplasm</location>
    </subcellularLocation>
    <subcellularLocation>
        <location evidence="1">Cytoplasm</location>
        <location evidence="1">Cytoskeleton</location>
        <location evidence="1">Microtubule organizing center</location>
        <location evidence="1">Centrosome</location>
    </subcellularLocation>
    <subcellularLocation>
        <location evidence="1">Nucleus</location>
    </subcellularLocation>
</comment>
<comment type="similarity">
    <text evidence="3">Belongs to the WD repeat DCAF12 family.</text>
</comment>
<organism>
    <name type="scientific">Gallus gallus</name>
    <name type="common">Chicken</name>
    <dbReference type="NCBI Taxonomy" id="9031"/>
    <lineage>
        <taxon>Eukaryota</taxon>
        <taxon>Metazoa</taxon>
        <taxon>Chordata</taxon>
        <taxon>Craniata</taxon>
        <taxon>Vertebrata</taxon>
        <taxon>Euteleostomi</taxon>
        <taxon>Archelosauria</taxon>
        <taxon>Archosauria</taxon>
        <taxon>Dinosauria</taxon>
        <taxon>Saurischia</taxon>
        <taxon>Theropoda</taxon>
        <taxon>Coelurosauria</taxon>
        <taxon>Aves</taxon>
        <taxon>Neognathae</taxon>
        <taxon>Galloanserae</taxon>
        <taxon>Galliformes</taxon>
        <taxon>Phasianidae</taxon>
        <taxon>Phasianinae</taxon>
        <taxon>Gallus</taxon>
    </lineage>
</organism>
<sequence>MARKTVSRKRKAAAASAAGPGGLYGEQYGWDHSVHKRKRLPPVKRSLVYYLKEREFHLGTLNKVFASQWLNHRQVVCGTKCNTLFVVDVQTGQITKIPILKDREPGMVNQQGCGIHAIELNPSRTLLATGGDNPNSLAIYRLPTLDPVCVGDDGHKDWIFSIAWISDTMAVSGSRDGSMGLWEVTEDVLSKSDSRHNLSQVPVYAHITHRALKDIPKENTNPDNCKVRALAFNNKNKELGAVSLDGYFHLWKAEHTLSKLLSTKLPYCRENVCLAYGQEWSVYAVGSQAHVSFLDPRQPSHNVKSVCSKERGSGIRSVSFYEHIITVGTGHGSLLFYDIRAQRFLDERPPRACYGQKQKLGGSEILKLTTGKGWLNHDETWRNYFSEINFFPNAVYTHCYDSSGTKLFVAGGPLPSGLHGNYAGLWS</sequence>
<accession>Q5F3R7</accession>